<accession>Q08DU8</accession>
<accession>F1MY65</accession>
<protein>
    <recommendedName>
        <fullName>Biogenesis of lysosome-related organelles complex 1 subunit 6</fullName>
        <shortName>BLOC-1 subunit 6</shortName>
    </recommendedName>
    <alternativeName>
        <fullName>Pallid protein homolog</fullName>
    </alternativeName>
    <alternativeName>
        <fullName>Pallidin</fullName>
    </alternativeName>
</protein>
<feature type="chain" id="PRO_0000420190" description="Biogenesis of lysosome-related organelles complex 1 subunit 6">
    <location>
        <begin position="1"/>
        <end position="172"/>
    </location>
</feature>
<feature type="region of interest" description="Disordered" evidence="4">
    <location>
        <begin position="1"/>
        <end position="36"/>
    </location>
</feature>
<feature type="region of interest" description="Disordered" evidence="4">
    <location>
        <begin position="135"/>
        <end position="172"/>
    </location>
</feature>
<feature type="coiled-coil region" evidence="3">
    <location>
        <begin position="125"/>
        <end position="167"/>
    </location>
</feature>
<feature type="compositionally biased region" description="Basic and acidic residues" evidence="4">
    <location>
        <begin position="143"/>
        <end position="164"/>
    </location>
</feature>
<reference key="1">
    <citation type="journal article" date="2005" name="BMC Genomics">
        <title>Characterization of 954 bovine full-CDS cDNA sequences.</title>
        <authorList>
            <person name="Harhay G.P."/>
            <person name="Sonstegard T.S."/>
            <person name="Keele J.W."/>
            <person name="Heaton M.P."/>
            <person name="Clawson M.L."/>
            <person name="Snelling W.M."/>
            <person name="Wiedmann R.T."/>
            <person name="Van Tassell C.P."/>
            <person name="Smith T.P.L."/>
        </authorList>
    </citation>
    <scope>NUCLEOTIDE SEQUENCE [LARGE SCALE MRNA]</scope>
</reference>
<reference key="2">
    <citation type="journal article" date="2009" name="Genome Biol.">
        <title>A whole-genome assembly of the domestic cow, Bos taurus.</title>
        <authorList>
            <person name="Zimin A.V."/>
            <person name="Delcher A.L."/>
            <person name="Florea L."/>
            <person name="Kelley D.R."/>
            <person name="Schatz M.C."/>
            <person name="Puiu D."/>
            <person name="Hanrahan F."/>
            <person name="Pertea G."/>
            <person name="Van Tassell C.P."/>
            <person name="Sonstegard T.S."/>
            <person name="Marcais G."/>
            <person name="Roberts M."/>
            <person name="Subramanian P."/>
            <person name="Yorke J.A."/>
            <person name="Salzberg S.L."/>
        </authorList>
    </citation>
    <scope>NUCLEOTIDE SEQUENCE [LARGE SCALE GENOMIC DNA]</scope>
    <source>
        <strain>Hereford</strain>
    </source>
</reference>
<reference key="3">
    <citation type="submission" date="2008-06" db="EMBL/GenBank/DDBJ databases">
        <authorList>
            <consortium name="NIH - Mammalian Gene Collection (MGC) project"/>
        </authorList>
    </citation>
    <scope>NUCLEOTIDE SEQUENCE [LARGE SCALE MRNA]</scope>
    <source>
        <strain>Hereford</strain>
        <tissue>Thymus</tissue>
    </source>
</reference>
<reference key="4">
    <citation type="journal article" date="2010" name="Mol. Psychiatry">
        <title>The dysbindin-containing complex (BLOC-1) in brain: developmental regulation, interaction with SNARE proteins and role in neurite outgrowth.</title>
        <authorList>
            <person name="Ghiani C.A."/>
            <person name="Starcevic M."/>
            <person name="Rodriguez-Fernandez I.A."/>
            <person name="Nazarian R."/>
            <person name="Cheli V.T."/>
            <person name="Chan L.N."/>
            <person name="Malvar J.S."/>
            <person name="de Vellis J."/>
            <person name="Sabatti C."/>
            <person name="Dell'Angelica E.C."/>
        </authorList>
    </citation>
    <scope>IDENTIFICATION IN THE BLOC-1 COMPLEX</scope>
    <scope>INTERACTION WITH SNAP25; SNAP47 AND STX12</scope>
</reference>
<comment type="function">
    <text evidence="1">Component of the BLOC-1 complex, a complex that is required for normal biogenesis of lysosome-related organelles (LRO), such as platelet dense granules and melanosomes. In concert with the AP-3 complex, the BLOC-1 complex is required to target membrane protein cargos into vesicles assembled at cell bodies for delivery into neurites and nerve terminals. The BLOC-1 complex, in association with SNARE proteins, is also proposed to be involved in neurite extension. May play a role in intracellular vesicle trafficking, particularly in the vesicle-docking and fusion process (By similarity).</text>
</comment>
<comment type="subunit">
    <text evidence="1 5">Homodimer. Octamer composed of one copy each BLOC1S1, BLOC1S2, BLOC1S3, BLOC1S4, BLOC1S5, BLOC1S6, DTNBP1/BLOC1S7 and SNAPIN/BLOC1S8. The BLOC-1 complex associates with the AP-3 protein complex and membrane protein cargos. Interacts with BLOC1S4, BLOC1S5, DTNBP1/BLOC1S7, F-actin (By similarity). Component of the biogenesis of lysosome-related organelles complex 1 (BLOC-1) composed of BLOC1S1, BLOC1S2, BLOC1S3, BLOC1S4, BLOC1S5, BLOC1S6, DTNBP1/BLOC1S7 and SNAPIN/BLOC1S8. Interacts with SNAP25, SNAP47 and STX12.</text>
</comment>
<comment type="subcellular location">
    <subcellularLocation>
        <location evidence="2">Cytoplasm</location>
    </subcellularLocation>
    <subcellularLocation>
        <location evidence="2">Membrane</location>
        <topology evidence="2">Peripheral membrane protein</topology>
    </subcellularLocation>
    <text evidence="2">It can exist as a soluble protein as well as a peripheral membrane protein.</text>
</comment>
<comment type="similarity">
    <text evidence="6">Belongs to the BLOC1S6 family.</text>
</comment>
<organism>
    <name type="scientific">Bos taurus</name>
    <name type="common">Bovine</name>
    <dbReference type="NCBI Taxonomy" id="9913"/>
    <lineage>
        <taxon>Eukaryota</taxon>
        <taxon>Metazoa</taxon>
        <taxon>Chordata</taxon>
        <taxon>Craniata</taxon>
        <taxon>Vertebrata</taxon>
        <taxon>Euteleostomi</taxon>
        <taxon>Mammalia</taxon>
        <taxon>Eutheria</taxon>
        <taxon>Laurasiatheria</taxon>
        <taxon>Artiodactyla</taxon>
        <taxon>Ruminantia</taxon>
        <taxon>Pecora</taxon>
        <taxon>Bovidae</taxon>
        <taxon>Bovinae</taxon>
        <taxon>Bos</taxon>
    </lineage>
</organism>
<evidence type="ECO:0000250" key="1"/>
<evidence type="ECO:0000250" key="2">
    <source>
        <dbReference type="UniProtKB" id="Q9UL45"/>
    </source>
</evidence>
<evidence type="ECO:0000255" key="3"/>
<evidence type="ECO:0000256" key="4">
    <source>
        <dbReference type="SAM" id="MobiDB-lite"/>
    </source>
</evidence>
<evidence type="ECO:0000269" key="5">
    <source>
    </source>
</evidence>
<evidence type="ECO:0000305" key="6"/>
<name>BL1S6_BOVIN</name>
<dbReference type="EMBL" id="BT030681">
    <property type="protein sequence ID" value="ABS44997.1"/>
    <property type="molecule type" value="mRNA"/>
</dbReference>
<dbReference type="EMBL" id="DAAA02029167">
    <property type="status" value="NOT_ANNOTATED_CDS"/>
    <property type="molecule type" value="Genomic_DNA"/>
</dbReference>
<dbReference type="EMBL" id="BC123557">
    <property type="protein sequence ID" value="AAI23558.1"/>
    <property type="molecule type" value="mRNA"/>
</dbReference>
<dbReference type="RefSeq" id="NP_001069793.1">
    <property type="nucleotide sequence ID" value="NM_001076325.1"/>
</dbReference>
<dbReference type="SMR" id="Q08DU8"/>
<dbReference type="FunCoup" id="Q08DU8">
    <property type="interactions" value="2537"/>
</dbReference>
<dbReference type="STRING" id="9913.ENSBTAP00000016245"/>
<dbReference type="PaxDb" id="9913-ENSBTAP00000016245"/>
<dbReference type="Ensembl" id="ENSBTAT00000016245.7">
    <property type="protein sequence ID" value="ENSBTAP00000016245.5"/>
    <property type="gene ID" value="ENSBTAG00000012250.7"/>
</dbReference>
<dbReference type="GeneID" id="614408"/>
<dbReference type="KEGG" id="bta:614408"/>
<dbReference type="CTD" id="26258"/>
<dbReference type="VEuPathDB" id="HostDB:ENSBTAG00000012250"/>
<dbReference type="VGNC" id="VGNC:26509">
    <property type="gene designation" value="BLOC1S6"/>
</dbReference>
<dbReference type="eggNOG" id="ENOG502RZNC">
    <property type="taxonomic scope" value="Eukaryota"/>
</dbReference>
<dbReference type="GeneTree" id="ENSGT00510000047812"/>
<dbReference type="HOGENOM" id="CLU_115118_1_0_1"/>
<dbReference type="InParanoid" id="Q08DU8"/>
<dbReference type="OMA" id="MMSDVKR"/>
<dbReference type="OrthoDB" id="19659at2759"/>
<dbReference type="TreeFam" id="TF325188"/>
<dbReference type="Reactome" id="R-BTA-432722">
    <property type="pathway name" value="Golgi Associated Vesicle Biogenesis"/>
</dbReference>
<dbReference type="Proteomes" id="UP000009136">
    <property type="component" value="Chromosome 10"/>
</dbReference>
<dbReference type="Bgee" id="ENSBTAG00000012250">
    <property type="expression patterns" value="Expressed in thyroid gland and 104 other cell types or tissues"/>
</dbReference>
<dbReference type="GO" id="GO:1904115">
    <property type="term" value="C:axon cytoplasm"/>
    <property type="evidence" value="ECO:0007669"/>
    <property type="project" value="GOC"/>
</dbReference>
<dbReference type="GO" id="GO:0031083">
    <property type="term" value="C:BLOC-1 complex"/>
    <property type="evidence" value="ECO:0000250"/>
    <property type="project" value="UniProtKB"/>
</dbReference>
<dbReference type="GO" id="GO:0044291">
    <property type="term" value="C:cell-cell contact zone"/>
    <property type="evidence" value="ECO:0007669"/>
    <property type="project" value="Ensembl"/>
</dbReference>
<dbReference type="GO" id="GO:0070938">
    <property type="term" value="C:contractile ring"/>
    <property type="evidence" value="ECO:0007669"/>
    <property type="project" value="Ensembl"/>
</dbReference>
<dbReference type="GO" id="GO:0005737">
    <property type="term" value="C:cytoplasm"/>
    <property type="evidence" value="ECO:0000250"/>
    <property type="project" value="UniProtKB"/>
</dbReference>
<dbReference type="GO" id="GO:0005768">
    <property type="term" value="C:endosome"/>
    <property type="evidence" value="ECO:0007669"/>
    <property type="project" value="Ensembl"/>
</dbReference>
<dbReference type="GO" id="GO:0031941">
    <property type="term" value="C:filamentous actin"/>
    <property type="evidence" value="ECO:0007669"/>
    <property type="project" value="Ensembl"/>
</dbReference>
<dbReference type="GO" id="GO:0005925">
    <property type="term" value="C:focal adhesion"/>
    <property type="evidence" value="ECO:0007669"/>
    <property type="project" value="Ensembl"/>
</dbReference>
<dbReference type="GO" id="GO:0043227">
    <property type="term" value="C:membrane-bounded organelle"/>
    <property type="evidence" value="ECO:0000250"/>
    <property type="project" value="UniProtKB"/>
</dbReference>
<dbReference type="GO" id="GO:1990742">
    <property type="term" value="C:microvesicle"/>
    <property type="evidence" value="ECO:0007669"/>
    <property type="project" value="Ensembl"/>
</dbReference>
<dbReference type="GO" id="GO:0001726">
    <property type="term" value="C:ruffle"/>
    <property type="evidence" value="ECO:0007669"/>
    <property type="project" value="Ensembl"/>
</dbReference>
<dbReference type="GO" id="GO:0031201">
    <property type="term" value="C:SNARE complex"/>
    <property type="evidence" value="ECO:0007669"/>
    <property type="project" value="Ensembl"/>
</dbReference>
<dbReference type="GO" id="GO:0001725">
    <property type="term" value="C:stress fiber"/>
    <property type="evidence" value="ECO:0007669"/>
    <property type="project" value="Ensembl"/>
</dbReference>
<dbReference type="GO" id="GO:0030133">
    <property type="term" value="C:transport vesicle"/>
    <property type="evidence" value="ECO:0000250"/>
    <property type="project" value="UniProtKB"/>
</dbReference>
<dbReference type="GO" id="GO:0051015">
    <property type="term" value="F:actin filament binding"/>
    <property type="evidence" value="ECO:0000250"/>
    <property type="project" value="UniProtKB"/>
</dbReference>
<dbReference type="GO" id="GO:0060090">
    <property type="term" value="F:molecular adaptor activity"/>
    <property type="evidence" value="ECO:0007669"/>
    <property type="project" value="Ensembl"/>
</dbReference>
<dbReference type="GO" id="GO:0042803">
    <property type="term" value="F:protein homodimerization activity"/>
    <property type="evidence" value="ECO:0000250"/>
    <property type="project" value="UniProtKB"/>
</dbReference>
<dbReference type="GO" id="GO:0051017">
    <property type="term" value="P:actin filament bundle assembly"/>
    <property type="evidence" value="ECO:0007669"/>
    <property type="project" value="Ensembl"/>
</dbReference>
<dbReference type="GO" id="GO:0046085">
    <property type="term" value="P:adenosine metabolic process"/>
    <property type="evidence" value="ECO:0007669"/>
    <property type="project" value="Ensembl"/>
</dbReference>
<dbReference type="GO" id="GO:0008089">
    <property type="term" value="P:anterograde axonal transport"/>
    <property type="evidence" value="ECO:0000250"/>
    <property type="project" value="UniProtKB"/>
</dbReference>
<dbReference type="GO" id="GO:0048490">
    <property type="term" value="P:anterograde synaptic vesicle transport"/>
    <property type="evidence" value="ECO:0000250"/>
    <property type="project" value="UniProtKB"/>
</dbReference>
<dbReference type="GO" id="GO:0046034">
    <property type="term" value="P:ATP metabolic process"/>
    <property type="evidence" value="ECO:0007669"/>
    <property type="project" value="Ensembl"/>
</dbReference>
<dbReference type="GO" id="GO:0007596">
    <property type="term" value="P:blood coagulation"/>
    <property type="evidence" value="ECO:0007669"/>
    <property type="project" value="Ensembl"/>
</dbReference>
<dbReference type="GO" id="GO:0002936">
    <property type="term" value="P:bradykinin biosynthetic process"/>
    <property type="evidence" value="ECO:0007669"/>
    <property type="project" value="Ensembl"/>
</dbReference>
<dbReference type="GO" id="GO:0071364">
    <property type="term" value="P:cellular response to epidermal growth factor stimulus"/>
    <property type="evidence" value="ECO:0007669"/>
    <property type="project" value="Ensembl"/>
</dbReference>
<dbReference type="GO" id="GO:0060271">
    <property type="term" value="P:cilium assembly"/>
    <property type="evidence" value="ECO:0007669"/>
    <property type="project" value="Ensembl"/>
</dbReference>
<dbReference type="GO" id="GO:0042745">
    <property type="term" value="P:circadian sleep/wake cycle"/>
    <property type="evidence" value="ECO:0007669"/>
    <property type="project" value="Ensembl"/>
</dbReference>
<dbReference type="GO" id="GO:0021542">
    <property type="term" value="P:dentate gyrus development"/>
    <property type="evidence" value="ECO:0007669"/>
    <property type="project" value="Ensembl"/>
</dbReference>
<dbReference type="GO" id="GO:0035646">
    <property type="term" value="P:endosome to melanosome transport"/>
    <property type="evidence" value="ECO:0000250"/>
    <property type="project" value="UniProtKB"/>
</dbReference>
<dbReference type="GO" id="GO:0003158">
    <property type="term" value="P:endothelium development"/>
    <property type="evidence" value="ECO:0007669"/>
    <property type="project" value="Ensembl"/>
</dbReference>
<dbReference type="GO" id="GO:0010467">
    <property type="term" value="P:gene expression"/>
    <property type="evidence" value="ECO:0007669"/>
    <property type="project" value="Ensembl"/>
</dbReference>
<dbReference type="GO" id="GO:0006536">
    <property type="term" value="P:glutamate metabolic process"/>
    <property type="evidence" value="ECO:0007669"/>
    <property type="project" value="Ensembl"/>
</dbReference>
<dbReference type="GO" id="GO:0006541">
    <property type="term" value="P:glutamine metabolic process"/>
    <property type="evidence" value="ECO:0007669"/>
    <property type="project" value="Ensembl"/>
</dbReference>
<dbReference type="GO" id="GO:0048872">
    <property type="term" value="P:homeostasis of number of cells"/>
    <property type="evidence" value="ECO:0007669"/>
    <property type="project" value="Ensembl"/>
</dbReference>
<dbReference type="GO" id="GO:0021854">
    <property type="term" value="P:hypothalamus development"/>
    <property type="evidence" value="ECO:0007669"/>
    <property type="project" value="Ensembl"/>
</dbReference>
<dbReference type="GO" id="GO:0033484">
    <property type="term" value="P:intracellular nitric oxide homeostasis"/>
    <property type="evidence" value="ECO:0007669"/>
    <property type="project" value="Ensembl"/>
</dbReference>
<dbReference type="GO" id="GO:0046907">
    <property type="term" value="P:intracellular transport"/>
    <property type="evidence" value="ECO:0000318"/>
    <property type="project" value="GO_Central"/>
</dbReference>
<dbReference type="GO" id="GO:0001822">
    <property type="term" value="P:kidney development"/>
    <property type="evidence" value="ECO:0007669"/>
    <property type="project" value="Ensembl"/>
</dbReference>
<dbReference type="GO" id="GO:0055088">
    <property type="term" value="P:lipid homeostasis"/>
    <property type="evidence" value="ECO:0007669"/>
    <property type="project" value="Ensembl"/>
</dbReference>
<dbReference type="GO" id="GO:0048286">
    <property type="term" value="P:lung alveolus development"/>
    <property type="evidence" value="ECO:0007669"/>
    <property type="project" value="Ensembl"/>
</dbReference>
<dbReference type="GO" id="GO:0030318">
    <property type="term" value="P:melanocyte differentiation"/>
    <property type="evidence" value="ECO:0007669"/>
    <property type="project" value="Ensembl"/>
</dbReference>
<dbReference type="GO" id="GO:0032402">
    <property type="term" value="P:melanosome transport"/>
    <property type="evidence" value="ECO:0000250"/>
    <property type="project" value="UniProtKB"/>
</dbReference>
<dbReference type="GO" id="GO:0061025">
    <property type="term" value="P:membrane fusion"/>
    <property type="evidence" value="ECO:0007669"/>
    <property type="project" value="Ensembl"/>
</dbReference>
<dbReference type="GO" id="GO:0007613">
    <property type="term" value="P:memory"/>
    <property type="evidence" value="ECO:0007669"/>
    <property type="project" value="Ensembl"/>
</dbReference>
<dbReference type="GO" id="GO:0035264">
    <property type="term" value="P:multicellular organism growth"/>
    <property type="evidence" value="ECO:0007669"/>
    <property type="project" value="Ensembl"/>
</dbReference>
<dbReference type="GO" id="GO:0031175">
    <property type="term" value="P:neuron projection development"/>
    <property type="evidence" value="ECO:0000250"/>
    <property type="project" value="UniProtKB"/>
</dbReference>
<dbReference type="GO" id="GO:0006644">
    <property type="term" value="P:phospholipid metabolic process"/>
    <property type="evidence" value="ECO:0007669"/>
    <property type="project" value="Ensembl"/>
</dbReference>
<dbReference type="GO" id="GO:0032816">
    <property type="term" value="P:positive regulation of natural killer cell activation"/>
    <property type="evidence" value="ECO:0007669"/>
    <property type="project" value="Ensembl"/>
</dbReference>
<dbReference type="GO" id="GO:0050942">
    <property type="term" value="P:positive regulation of pigment cell differentiation"/>
    <property type="evidence" value="ECO:0000250"/>
    <property type="project" value="UniProtKB"/>
</dbReference>
<dbReference type="GO" id="GO:0006605">
    <property type="term" value="P:protein targeting"/>
    <property type="evidence" value="ECO:0007669"/>
    <property type="project" value="Ensembl"/>
</dbReference>
<dbReference type="GO" id="GO:0071806">
    <property type="term" value="P:protein transmembrane transport"/>
    <property type="evidence" value="ECO:0007669"/>
    <property type="project" value="Ensembl"/>
</dbReference>
<dbReference type="GO" id="GO:0003016">
    <property type="term" value="P:respiratory system process"/>
    <property type="evidence" value="ECO:0007669"/>
    <property type="project" value="Ensembl"/>
</dbReference>
<dbReference type="GO" id="GO:1905144">
    <property type="term" value="P:response to acetylcholine"/>
    <property type="evidence" value="ECO:0007669"/>
    <property type="project" value="Ensembl"/>
</dbReference>
<dbReference type="GO" id="GO:0014823">
    <property type="term" value="P:response to activity"/>
    <property type="evidence" value="ECO:0007669"/>
    <property type="project" value="Ensembl"/>
</dbReference>
<dbReference type="GO" id="GO:0009410">
    <property type="term" value="P:response to xenobiotic stimulus"/>
    <property type="evidence" value="ECO:0007669"/>
    <property type="project" value="Ensembl"/>
</dbReference>
<dbReference type="GO" id="GO:0033299">
    <property type="term" value="P:secretion of lysosomal enzymes"/>
    <property type="evidence" value="ECO:0007669"/>
    <property type="project" value="Ensembl"/>
</dbReference>
<dbReference type="GO" id="GO:0042311">
    <property type="term" value="P:vasodilation"/>
    <property type="evidence" value="ECO:0007669"/>
    <property type="project" value="Ensembl"/>
</dbReference>
<dbReference type="InterPro" id="IPR017242">
    <property type="entry name" value="BLOC-1_pallidin"/>
</dbReference>
<dbReference type="InterPro" id="IPR028119">
    <property type="entry name" value="Snapin/Pallidin/Snn1"/>
</dbReference>
<dbReference type="PANTHER" id="PTHR31328">
    <property type="entry name" value="BIOGENESIS OF LYSOSOME-RELATED ORGANELLES COMPLEX 1 SUBUNIT 6"/>
    <property type="match status" value="1"/>
</dbReference>
<dbReference type="PANTHER" id="PTHR31328:SF2">
    <property type="entry name" value="BIOGENESIS OF LYSOSOME-RELATED ORGANELLES COMPLEX 1 SUBUNIT 6"/>
    <property type="match status" value="1"/>
</dbReference>
<dbReference type="Pfam" id="PF14712">
    <property type="entry name" value="Snapin_Pallidin"/>
    <property type="match status" value="1"/>
</dbReference>
<dbReference type="PIRSF" id="PIRSF037609">
    <property type="entry name" value="BLOC-1_complex_pallidin"/>
    <property type="match status" value="1"/>
</dbReference>
<proteinExistence type="evidence at protein level"/>
<keyword id="KW-0175">Coiled coil</keyword>
<keyword id="KW-0963">Cytoplasm</keyword>
<keyword id="KW-0472">Membrane</keyword>
<keyword id="KW-1185">Reference proteome</keyword>
<sequence length="172" mass="19546">MSVPGPPSPDGVLAGPPEGLEAGDLTPGLSDTSPDEGLIEDLTIEDKAVEQLAEGLLSHYLPDLQRSKQALQELTQNQVVLLDTLEQEISKFKECHSMLDINALFTEAKHYHAKLVNIRKEMLMLHEKTSKLKKRALKLQQKRQKEELEREQQREKEFEREKQLTAKPAKRT</sequence>
<gene>
    <name type="primary">BLOC1S6</name>
    <name type="synonym">PA</name>
    <name type="synonym">PLDN</name>
</gene>